<evidence type="ECO:0000269" key="1">
    <source ref="1"/>
</evidence>
<evidence type="ECO:0000303" key="2">
    <source ref="1"/>
</evidence>
<evidence type="ECO:0000305" key="3"/>
<protein>
    <recommendedName>
        <fullName>Very early lactation protein</fullName>
        <shortName>VELP</shortName>
    </recommendedName>
</protein>
<reference evidence="3" key="1">
    <citation type="journal article" date="2007" name="Comp. Biochem. Physiol.">
        <title>Proteomic analysis of whey and casein proteins in early milk from the marsupial Trichosurus vulpecula, the common brushtail possum.</title>
        <authorList>
            <person name="Kuy S."/>
            <person name="Kelly V.C."/>
            <person name="Smit A.-M."/>
            <person name="Palmer D.J."/>
            <person name="Cooper G.J."/>
        </authorList>
    </citation>
    <scope>PROTEIN SEQUENCE</scope>
    <scope>SUBUNIT</scope>
    <scope>SUBCELLULAR LOCATION</scope>
    <scope>TISSUE SPECIFICITY</scope>
    <scope>DEVELOPMENTAL STAGE</scope>
    <scope>GLYCOSYLATION</scope>
    <scope>VARIANT ILE-8</scope>
    <source>
        <tissue evidence="1">Lactating mammary gland</tissue>
    </source>
</reference>
<proteinExistence type="evidence at protein level"/>
<keyword id="KW-0903">Direct protein sequencing</keyword>
<keyword id="KW-0325">Glycoprotein</keyword>
<keyword id="KW-0494">Milk protein</keyword>
<keyword id="KW-0964">Secreted</keyword>
<keyword id="KW-0730">Sialic acid</keyword>
<accession>P85093</accession>
<organism>
    <name type="scientific">Trichosurus vulpecula</name>
    <name type="common">Brush-tailed possum</name>
    <dbReference type="NCBI Taxonomy" id="9337"/>
    <lineage>
        <taxon>Eukaryota</taxon>
        <taxon>Metazoa</taxon>
        <taxon>Chordata</taxon>
        <taxon>Craniata</taxon>
        <taxon>Vertebrata</taxon>
        <taxon>Euteleostomi</taxon>
        <taxon>Mammalia</taxon>
        <taxon>Metatheria</taxon>
        <taxon>Diprotodontia</taxon>
        <taxon>Phalangeridae</taxon>
        <taxon>Trichosurus</taxon>
    </lineage>
</organism>
<sequence length="38" mass="4589">DVNELNDVEERRAVVPQVWEIDIMITKHNDEIIQIEER</sequence>
<name>VELAC_TRIVU</name>
<dbReference type="GO" id="GO:0005576">
    <property type="term" value="C:extracellular region"/>
    <property type="evidence" value="ECO:0007669"/>
    <property type="project" value="UniProtKB-SubCell"/>
</dbReference>
<comment type="subunit">
    <text evidence="1">Homodimer.</text>
</comment>
<comment type="subcellular location">
    <subcellularLocation>
        <location evidence="1">Secreted</location>
    </subcellularLocation>
</comment>
<comment type="tissue specificity">
    <text evidence="1">Found in the whey fraction of milk (at protein level).</text>
</comment>
<comment type="developmental stage">
    <text evidence="1">Expressed predominantly during the first 40 days of lactation, after which levels decrease sharply.</text>
</comment>
<comment type="PTM">
    <text evidence="1">O-glycosylated. Contains sialic acid residues.</text>
</comment>
<feature type="chain" id="PRO_0000292881" description="Very early lactation protein">
    <location>
        <begin position="1"/>
        <end position="38" status="greater than"/>
    </location>
</feature>
<feature type="sequence variant" evidence="1">
    <original>V</original>
    <variation>I</variation>
    <location>
        <position position="8"/>
    </location>
</feature>
<feature type="unsure residue" description="I or L" evidence="1">
    <location>
        <position position="21"/>
    </location>
</feature>
<feature type="unsure residue" description="I or L" evidence="1">
    <location>
        <position position="23"/>
    </location>
</feature>
<feature type="unsure residue" description="I or L" evidence="1">
    <location>
        <position position="25"/>
    </location>
</feature>
<feature type="unsure residue" description="I or L" evidence="1">
    <location>
        <position position="32"/>
    </location>
</feature>
<feature type="unsure residue" description="I or L" evidence="1">
    <location>
        <position position="33"/>
    </location>
</feature>
<feature type="unsure residue" description="Q or K" evidence="1">
    <location>
        <position position="34"/>
    </location>
</feature>
<feature type="unsure residue" description="I or L" evidence="1">
    <location>
        <position position="35"/>
    </location>
</feature>
<feature type="non-consecutive residues" evidence="2">
    <location>
        <begin position="17"/>
        <end position="18"/>
    </location>
</feature>
<feature type="non-consecutive residues" evidence="2">
    <location>
        <begin position="27"/>
        <end position="28"/>
    </location>
</feature>
<feature type="non-terminal residue" evidence="2">
    <location>
        <position position="38"/>
    </location>
</feature>